<accession>B7MI25</accession>
<reference key="1">
    <citation type="journal article" date="2009" name="PLoS Genet.">
        <title>Organised genome dynamics in the Escherichia coli species results in highly diverse adaptive paths.</title>
        <authorList>
            <person name="Touchon M."/>
            <person name="Hoede C."/>
            <person name="Tenaillon O."/>
            <person name="Barbe V."/>
            <person name="Baeriswyl S."/>
            <person name="Bidet P."/>
            <person name="Bingen E."/>
            <person name="Bonacorsi S."/>
            <person name="Bouchier C."/>
            <person name="Bouvet O."/>
            <person name="Calteau A."/>
            <person name="Chiapello H."/>
            <person name="Clermont O."/>
            <person name="Cruveiller S."/>
            <person name="Danchin A."/>
            <person name="Diard M."/>
            <person name="Dossat C."/>
            <person name="Karoui M.E."/>
            <person name="Frapy E."/>
            <person name="Garry L."/>
            <person name="Ghigo J.M."/>
            <person name="Gilles A.M."/>
            <person name="Johnson J."/>
            <person name="Le Bouguenec C."/>
            <person name="Lescat M."/>
            <person name="Mangenot S."/>
            <person name="Martinez-Jehanne V."/>
            <person name="Matic I."/>
            <person name="Nassif X."/>
            <person name="Oztas S."/>
            <person name="Petit M.A."/>
            <person name="Pichon C."/>
            <person name="Rouy Z."/>
            <person name="Ruf C.S."/>
            <person name="Schneider D."/>
            <person name="Tourret J."/>
            <person name="Vacherie B."/>
            <person name="Vallenet D."/>
            <person name="Medigue C."/>
            <person name="Rocha E.P.C."/>
            <person name="Denamur E."/>
        </authorList>
    </citation>
    <scope>NUCLEOTIDE SEQUENCE [LARGE SCALE GENOMIC DNA]</scope>
    <source>
        <strain>S88 / ExPEC</strain>
    </source>
</reference>
<gene>
    <name evidence="1" type="primary">fdhE</name>
    <name type="ordered locus">ECS88_4339</name>
</gene>
<comment type="function">
    <text evidence="1">Necessary for formate dehydrogenase activity.</text>
</comment>
<comment type="subcellular location">
    <subcellularLocation>
        <location evidence="1">Cytoplasm</location>
    </subcellularLocation>
</comment>
<comment type="similarity">
    <text evidence="1">Belongs to the FdhE family.</text>
</comment>
<sequence length="309" mass="34719">MSIRIIPQDELGSSEKRTADMIPPLLFPRLKNLYNRRAERLRELAENNPLGDYLRFAALIAHAQEVVLYDHPLEMDLTTRIKEASAQGKPPLDIHVLPRDKHWQKLLMALIAELKPEMSGPALAVIENLEKASTQELEDMASALFASDFSSVSSDKAPFIWAALSLYWAQMANLIPGKARAEYGEQRQYCPVCGSMPVSSMVQIGTTQGLRYLHCNLCETEWHVVRVKCSNCEQSGKLHYWSLDDEQAAIKAESCDDCGTYLKILYQEKEPKVEAVADDLASLVLDARMEQEGYARSSINPFLFPGEGE</sequence>
<dbReference type="EMBL" id="CU928161">
    <property type="protein sequence ID" value="CAR05522.1"/>
    <property type="molecule type" value="Genomic_DNA"/>
</dbReference>
<dbReference type="RefSeq" id="WP_000027720.1">
    <property type="nucleotide sequence ID" value="NC_011742.1"/>
</dbReference>
<dbReference type="SMR" id="B7MI25"/>
<dbReference type="KEGG" id="ecz:ECS88_4339"/>
<dbReference type="HOGENOM" id="CLU_055275_0_0_6"/>
<dbReference type="Proteomes" id="UP000000747">
    <property type="component" value="Chromosome"/>
</dbReference>
<dbReference type="GO" id="GO:0005829">
    <property type="term" value="C:cytosol"/>
    <property type="evidence" value="ECO:0007669"/>
    <property type="project" value="TreeGrafter"/>
</dbReference>
<dbReference type="GO" id="GO:0008199">
    <property type="term" value="F:ferric iron binding"/>
    <property type="evidence" value="ECO:0007669"/>
    <property type="project" value="TreeGrafter"/>
</dbReference>
<dbReference type="GO" id="GO:0051604">
    <property type="term" value="P:protein maturation"/>
    <property type="evidence" value="ECO:0007669"/>
    <property type="project" value="TreeGrafter"/>
</dbReference>
<dbReference type="CDD" id="cd16341">
    <property type="entry name" value="FdhE"/>
    <property type="match status" value="1"/>
</dbReference>
<dbReference type="FunFam" id="3.90.1670.10:FF:000001">
    <property type="entry name" value="Protein FdhE"/>
    <property type="match status" value="1"/>
</dbReference>
<dbReference type="Gene3D" id="3.90.1670.10">
    <property type="entry name" value="FdhE-like domain"/>
    <property type="match status" value="1"/>
</dbReference>
<dbReference type="HAMAP" id="MF_00611">
    <property type="entry name" value="FdeH"/>
    <property type="match status" value="1"/>
</dbReference>
<dbReference type="InterPro" id="IPR024064">
    <property type="entry name" value="FdhE-like_sf"/>
</dbReference>
<dbReference type="InterPro" id="IPR056796">
    <property type="entry name" value="FdhE_C"/>
</dbReference>
<dbReference type="InterPro" id="IPR056797">
    <property type="entry name" value="FdhE_central"/>
</dbReference>
<dbReference type="InterPro" id="IPR056774">
    <property type="entry name" value="FdhE_N"/>
</dbReference>
<dbReference type="InterPro" id="IPR006452">
    <property type="entry name" value="Formate_DH_accessory"/>
</dbReference>
<dbReference type="NCBIfam" id="TIGR01562">
    <property type="entry name" value="FdhE"/>
    <property type="match status" value="1"/>
</dbReference>
<dbReference type="NCBIfam" id="NF002925">
    <property type="entry name" value="PRK03564.1"/>
    <property type="match status" value="1"/>
</dbReference>
<dbReference type="PANTHER" id="PTHR37689">
    <property type="entry name" value="PROTEIN FDHE"/>
    <property type="match status" value="1"/>
</dbReference>
<dbReference type="PANTHER" id="PTHR37689:SF1">
    <property type="entry name" value="PROTEIN FDHE"/>
    <property type="match status" value="1"/>
</dbReference>
<dbReference type="Pfam" id="PF24860">
    <property type="entry name" value="FdhE_C"/>
    <property type="match status" value="1"/>
</dbReference>
<dbReference type="Pfam" id="PF24859">
    <property type="entry name" value="FdhE_central"/>
    <property type="match status" value="1"/>
</dbReference>
<dbReference type="Pfam" id="PF04216">
    <property type="entry name" value="FdhE_N"/>
    <property type="match status" value="1"/>
</dbReference>
<dbReference type="PIRSF" id="PIRSF018296">
    <property type="entry name" value="Format_dh_formtn"/>
    <property type="match status" value="1"/>
</dbReference>
<dbReference type="SUPFAM" id="SSF144020">
    <property type="entry name" value="FdhE-like"/>
    <property type="match status" value="1"/>
</dbReference>
<keyword id="KW-0963">Cytoplasm</keyword>
<keyword id="KW-1185">Reference proteome</keyword>
<protein>
    <recommendedName>
        <fullName evidence="1">Protein FdhE</fullName>
    </recommendedName>
</protein>
<evidence type="ECO:0000255" key="1">
    <source>
        <dbReference type="HAMAP-Rule" id="MF_00611"/>
    </source>
</evidence>
<feature type="chain" id="PRO_1000130353" description="Protein FdhE">
    <location>
        <begin position="1"/>
        <end position="309"/>
    </location>
</feature>
<proteinExistence type="inferred from homology"/>
<organism>
    <name type="scientific">Escherichia coli O45:K1 (strain S88 / ExPEC)</name>
    <dbReference type="NCBI Taxonomy" id="585035"/>
    <lineage>
        <taxon>Bacteria</taxon>
        <taxon>Pseudomonadati</taxon>
        <taxon>Pseudomonadota</taxon>
        <taxon>Gammaproteobacteria</taxon>
        <taxon>Enterobacterales</taxon>
        <taxon>Enterobacteriaceae</taxon>
        <taxon>Escherichia</taxon>
    </lineage>
</organism>
<name>FDHE_ECO45</name>